<reference key="1">
    <citation type="journal article" date="1999" name="J. Biol. Chem.">
        <title>Molecular cloning of a novel alpha2,3-sialyltransferase (ST3Gal VI) that sialylates type II lactosamine structures on glycoproteins and glycolipids.</title>
        <authorList>
            <person name="Okajima T."/>
            <person name="Fukumoto S."/>
            <person name="Miyazaki H."/>
            <person name="Ishida H."/>
            <person name="Kiso M."/>
            <person name="Furukawa K."/>
            <person name="Urano T."/>
            <person name="Furukawa K."/>
        </authorList>
    </citation>
    <scope>NUCLEOTIDE SEQUENCE [MRNA] (ISOFORM 1)</scope>
    <scope>CHARACTERIZATION</scope>
    <scope>FUNCTION</scope>
    <scope>CATALYTIC ACTIVITY</scope>
    <scope>BIOPHYSICOCHEMICAL PROPERTIES</scope>
    <source>
        <tissue>Brain</tissue>
    </source>
</reference>
<reference key="2">
    <citation type="submission" date="1999-01" db="EMBL/GenBank/DDBJ databases">
        <title>Sialyltransferases.</title>
        <authorList>
            <person name="Kapitonov D."/>
            <person name="Yu R.K."/>
        </authorList>
    </citation>
    <scope>NUCLEOTIDE SEQUENCE [MRNA] (ISOFORM 1)</scope>
    <source>
        <tissue>Fetal brain</tissue>
    </source>
</reference>
<reference key="3">
    <citation type="journal article" date="2004" name="Nat. Genet.">
        <title>Complete sequencing and characterization of 21,243 full-length human cDNAs.</title>
        <authorList>
            <person name="Ota T."/>
            <person name="Suzuki Y."/>
            <person name="Nishikawa T."/>
            <person name="Otsuki T."/>
            <person name="Sugiyama T."/>
            <person name="Irie R."/>
            <person name="Wakamatsu A."/>
            <person name="Hayashi K."/>
            <person name="Sato H."/>
            <person name="Nagai K."/>
            <person name="Kimura K."/>
            <person name="Makita H."/>
            <person name="Sekine M."/>
            <person name="Obayashi M."/>
            <person name="Nishi T."/>
            <person name="Shibahara T."/>
            <person name="Tanaka T."/>
            <person name="Ishii S."/>
            <person name="Yamamoto J."/>
            <person name="Saito K."/>
            <person name="Kawai Y."/>
            <person name="Isono Y."/>
            <person name="Nakamura Y."/>
            <person name="Nagahari K."/>
            <person name="Murakami K."/>
            <person name="Yasuda T."/>
            <person name="Iwayanagi T."/>
            <person name="Wagatsuma M."/>
            <person name="Shiratori A."/>
            <person name="Sudo H."/>
            <person name="Hosoiri T."/>
            <person name="Kaku Y."/>
            <person name="Kodaira H."/>
            <person name="Kondo H."/>
            <person name="Sugawara M."/>
            <person name="Takahashi M."/>
            <person name="Kanda K."/>
            <person name="Yokoi T."/>
            <person name="Furuya T."/>
            <person name="Kikkawa E."/>
            <person name="Omura Y."/>
            <person name="Abe K."/>
            <person name="Kamihara K."/>
            <person name="Katsuta N."/>
            <person name="Sato K."/>
            <person name="Tanikawa M."/>
            <person name="Yamazaki M."/>
            <person name="Ninomiya K."/>
            <person name="Ishibashi T."/>
            <person name="Yamashita H."/>
            <person name="Murakawa K."/>
            <person name="Fujimori K."/>
            <person name="Tanai H."/>
            <person name="Kimata M."/>
            <person name="Watanabe M."/>
            <person name="Hiraoka S."/>
            <person name="Chiba Y."/>
            <person name="Ishida S."/>
            <person name="Ono Y."/>
            <person name="Takiguchi S."/>
            <person name="Watanabe S."/>
            <person name="Yosida M."/>
            <person name="Hotuta T."/>
            <person name="Kusano J."/>
            <person name="Kanehori K."/>
            <person name="Takahashi-Fujii A."/>
            <person name="Hara H."/>
            <person name="Tanase T.-O."/>
            <person name="Nomura Y."/>
            <person name="Togiya S."/>
            <person name="Komai F."/>
            <person name="Hara R."/>
            <person name="Takeuchi K."/>
            <person name="Arita M."/>
            <person name="Imose N."/>
            <person name="Musashino K."/>
            <person name="Yuuki H."/>
            <person name="Oshima A."/>
            <person name="Sasaki N."/>
            <person name="Aotsuka S."/>
            <person name="Yoshikawa Y."/>
            <person name="Matsunawa H."/>
            <person name="Ichihara T."/>
            <person name="Shiohata N."/>
            <person name="Sano S."/>
            <person name="Moriya S."/>
            <person name="Momiyama H."/>
            <person name="Satoh N."/>
            <person name="Takami S."/>
            <person name="Terashima Y."/>
            <person name="Suzuki O."/>
            <person name="Nakagawa S."/>
            <person name="Senoh A."/>
            <person name="Mizoguchi H."/>
            <person name="Goto Y."/>
            <person name="Shimizu F."/>
            <person name="Wakebe H."/>
            <person name="Hishigaki H."/>
            <person name="Watanabe T."/>
            <person name="Sugiyama A."/>
            <person name="Takemoto M."/>
            <person name="Kawakami B."/>
            <person name="Yamazaki M."/>
            <person name="Watanabe K."/>
            <person name="Kumagai A."/>
            <person name="Itakura S."/>
            <person name="Fukuzumi Y."/>
            <person name="Fujimori Y."/>
            <person name="Komiyama M."/>
            <person name="Tashiro H."/>
            <person name="Tanigami A."/>
            <person name="Fujiwara T."/>
            <person name="Ono T."/>
            <person name="Yamada K."/>
            <person name="Fujii Y."/>
            <person name="Ozaki K."/>
            <person name="Hirao M."/>
            <person name="Ohmori Y."/>
            <person name="Kawabata A."/>
            <person name="Hikiji T."/>
            <person name="Kobatake N."/>
            <person name="Inagaki H."/>
            <person name="Ikema Y."/>
            <person name="Okamoto S."/>
            <person name="Okitani R."/>
            <person name="Kawakami T."/>
            <person name="Noguchi S."/>
            <person name="Itoh T."/>
            <person name="Shigeta K."/>
            <person name="Senba T."/>
            <person name="Matsumura K."/>
            <person name="Nakajima Y."/>
            <person name="Mizuno T."/>
            <person name="Morinaga M."/>
            <person name="Sasaki M."/>
            <person name="Togashi T."/>
            <person name="Oyama M."/>
            <person name="Hata H."/>
            <person name="Watanabe M."/>
            <person name="Komatsu T."/>
            <person name="Mizushima-Sugano J."/>
            <person name="Satoh T."/>
            <person name="Shirai Y."/>
            <person name="Takahashi Y."/>
            <person name="Nakagawa K."/>
            <person name="Okumura K."/>
            <person name="Nagase T."/>
            <person name="Nomura N."/>
            <person name="Kikuchi H."/>
            <person name="Masuho Y."/>
            <person name="Yamashita R."/>
            <person name="Nakai K."/>
            <person name="Yada T."/>
            <person name="Nakamura Y."/>
            <person name="Ohara O."/>
            <person name="Isogai T."/>
            <person name="Sugano S."/>
        </authorList>
    </citation>
    <scope>NUCLEOTIDE SEQUENCE [LARGE SCALE MRNA] (ISOFORMS 1 AND 2)</scope>
    <source>
        <tissue>Placenta</tissue>
    </source>
</reference>
<reference key="4">
    <citation type="journal article" date="2006" name="Nature">
        <title>The DNA sequence, annotation and analysis of human chromosome 3.</title>
        <authorList>
            <person name="Muzny D.M."/>
            <person name="Scherer S.E."/>
            <person name="Kaul R."/>
            <person name="Wang J."/>
            <person name="Yu J."/>
            <person name="Sudbrak R."/>
            <person name="Buhay C.J."/>
            <person name="Chen R."/>
            <person name="Cree A."/>
            <person name="Ding Y."/>
            <person name="Dugan-Rocha S."/>
            <person name="Gill R."/>
            <person name="Gunaratne P."/>
            <person name="Harris R.A."/>
            <person name="Hawes A.C."/>
            <person name="Hernandez J."/>
            <person name="Hodgson A.V."/>
            <person name="Hume J."/>
            <person name="Jackson A."/>
            <person name="Khan Z.M."/>
            <person name="Kovar-Smith C."/>
            <person name="Lewis L.R."/>
            <person name="Lozado R.J."/>
            <person name="Metzker M.L."/>
            <person name="Milosavljevic A."/>
            <person name="Miner G.R."/>
            <person name="Morgan M.B."/>
            <person name="Nazareth L.V."/>
            <person name="Scott G."/>
            <person name="Sodergren E."/>
            <person name="Song X.-Z."/>
            <person name="Steffen D."/>
            <person name="Wei S."/>
            <person name="Wheeler D.A."/>
            <person name="Wright M.W."/>
            <person name="Worley K.C."/>
            <person name="Yuan Y."/>
            <person name="Zhang Z."/>
            <person name="Adams C.Q."/>
            <person name="Ansari-Lari M.A."/>
            <person name="Ayele M."/>
            <person name="Brown M.J."/>
            <person name="Chen G."/>
            <person name="Chen Z."/>
            <person name="Clendenning J."/>
            <person name="Clerc-Blankenburg K.P."/>
            <person name="Chen R."/>
            <person name="Chen Z."/>
            <person name="Davis C."/>
            <person name="Delgado O."/>
            <person name="Dinh H.H."/>
            <person name="Dong W."/>
            <person name="Draper H."/>
            <person name="Ernst S."/>
            <person name="Fu G."/>
            <person name="Gonzalez-Garay M.L."/>
            <person name="Garcia D.K."/>
            <person name="Gillett W."/>
            <person name="Gu J."/>
            <person name="Hao B."/>
            <person name="Haugen E."/>
            <person name="Havlak P."/>
            <person name="He X."/>
            <person name="Hennig S."/>
            <person name="Hu S."/>
            <person name="Huang W."/>
            <person name="Jackson L.R."/>
            <person name="Jacob L.S."/>
            <person name="Kelly S.H."/>
            <person name="Kube M."/>
            <person name="Levy R."/>
            <person name="Li Z."/>
            <person name="Liu B."/>
            <person name="Liu J."/>
            <person name="Liu W."/>
            <person name="Lu J."/>
            <person name="Maheshwari M."/>
            <person name="Nguyen B.-V."/>
            <person name="Okwuonu G.O."/>
            <person name="Palmeiri A."/>
            <person name="Pasternak S."/>
            <person name="Perez L.M."/>
            <person name="Phelps K.A."/>
            <person name="Plopper F.J."/>
            <person name="Qiang B."/>
            <person name="Raymond C."/>
            <person name="Rodriguez R."/>
            <person name="Saenphimmachak C."/>
            <person name="Santibanez J."/>
            <person name="Shen H."/>
            <person name="Shen Y."/>
            <person name="Subramanian S."/>
            <person name="Tabor P.E."/>
            <person name="Verduzco D."/>
            <person name="Waldron L."/>
            <person name="Wang J."/>
            <person name="Wang J."/>
            <person name="Wang Q."/>
            <person name="Williams G.A."/>
            <person name="Wong G.K.-S."/>
            <person name="Yao Z."/>
            <person name="Zhang J."/>
            <person name="Zhang X."/>
            <person name="Zhao G."/>
            <person name="Zhou J."/>
            <person name="Zhou Y."/>
            <person name="Nelson D."/>
            <person name="Lehrach H."/>
            <person name="Reinhardt R."/>
            <person name="Naylor S.L."/>
            <person name="Yang H."/>
            <person name="Olson M."/>
            <person name="Weinstock G."/>
            <person name="Gibbs R.A."/>
        </authorList>
    </citation>
    <scope>NUCLEOTIDE SEQUENCE [LARGE SCALE GENOMIC DNA]</scope>
</reference>
<reference key="5">
    <citation type="submission" date="2005-09" db="EMBL/GenBank/DDBJ databases">
        <authorList>
            <person name="Mural R.J."/>
            <person name="Istrail S."/>
            <person name="Sutton G.G."/>
            <person name="Florea L."/>
            <person name="Halpern A.L."/>
            <person name="Mobarry C.M."/>
            <person name="Lippert R."/>
            <person name="Walenz B."/>
            <person name="Shatkay H."/>
            <person name="Dew I."/>
            <person name="Miller J.R."/>
            <person name="Flanigan M.J."/>
            <person name="Edwards N.J."/>
            <person name="Bolanos R."/>
            <person name="Fasulo D."/>
            <person name="Halldorsson B.V."/>
            <person name="Hannenhalli S."/>
            <person name="Turner R."/>
            <person name="Yooseph S."/>
            <person name="Lu F."/>
            <person name="Nusskern D.R."/>
            <person name="Shue B.C."/>
            <person name="Zheng X.H."/>
            <person name="Zhong F."/>
            <person name="Delcher A.L."/>
            <person name="Huson D.H."/>
            <person name="Kravitz S.A."/>
            <person name="Mouchard L."/>
            <person name="Reinert K."/>
            <person name="Remington K.A."/>
            <person name="Clark A.G."/>
            <person name="Waterman M.S."/>
            <person name="Eichler E.E."/>
            <person name="Adams M.D."/>
            <person name="Hunkapiller M.W."/>
            <person name="Myers E.W."/>
            <person name="Venter J.C."/>
        </authorList>
    </citation>
    <scope>NUCLEOTIDE SEQUENCE [LARGE SCALE GENOMIC DNA]</scope>
</reference>
<reference key="6">
    <citation type="journal article" date="2004" name="Genome Res.">
        <title>The status, quality, and expansion of the NIH full-length cDNA project: the Mammalian Gene Collection (MGC).</title>
        <authorList>
            <consortium name="The MGC Project Team"/>
        </authorList>
    </citation>
    <scope>NUCLEOTIDE SEQUENCE [LARGE SCALE MRNA] (ISOFORM 1)</scope>
    <source>
        <tissue>Placenta</tissue>
    </source>
</reference>
<reference key="7">
    <citation type="journal article" date="2016" name="Biochem. Biophys. Res. Commun.">
        <title>A systematic analysis of acceptor specificity and reaction kinetics of five human alpha(2,3)sialyltransferases: Product inhibition studies illustrate reaction mechanism for ST3Gal-I.</title>
        <authorList>
            <person name="Gupta R."/>
            <person name="Matta K.L."/>
            <person name="Neelamegham S."/>
        </authorList>
    </citation>
    <scope>FUNCTION</scope>
    <scope>CATALYTIC ACTIVITY</scope>
</reference>
<reference key="8">
    <citation type="journal article" date="2009" name="J. Proteome Res.">
        <title>Glycoproteomics analysis of human liver tissue by combination of multiple enzyme digestion and hydrazide chemistry.</title>
        <authorList>
            <person name="Chen R."/>
            <person name="Jiang X."/>
            <person name="Sun D."/>
            <person name="Han G."/>
            <person name="Wang F."/>
            <person name="Ye M."/>
            <person name="Wang L."/>
            <person name="Zou H."/>
        </authorList>
    </citation>
    <scope>GLYCOSYLATION [LARGE SCALE ANALYSIS] AT ASN-308</scope>
    <source>
        <tissue>Liver</tissue>
    </source>
</reference>
<keyword id="KW-0025">Alternative splicing</keyword>
<keyword id="KW-0325">Glycoprotein</keyword>
<keyword id="KW-0328">Glycosyltransferase</keyword>
<keyword id="KW-0333">Golgi apparatus</keyword>
<keyword id="KW-0472">Membrane</keyword>
<keyword id="KW-1267">Proteomics identification</keyword>
<keyword id="KW-1185">Reference proteome</keyword>
<keyword id="KW-0735">Signal-anchor</keyword>
<keyword id="KW-0808">Transferase</keyword>
<keyword id="KW-0812">Transmembrane</keyword>
<keyword id="KW-1133">Transmembrane helix</keyword>
<name>SIA10_HUMAN</name>
<protein>
    <recommendedName>
        <fullName>Type 2 lactosamine alpha-2,3-sialyltransferase</fullName>
        <ecNumber evidence="3 5">2.4.3.6</ecNumber>
    </recommendedName>
    <alternativeName>
        <fullName>CMP-NeuAc:beta-galactoside alpha-2,3-sialyltransferase VI</fullName>
    </alternativeName>
    <alternativeName>
        <fullName>ST3Gal VI</fullName>
        <shortName>ST3GalVI</shortName>
    </alternativeName>
    <alternativeName>
        <fullName>Sialyltransferase 10</fullName>
    </alternativeName>
</protein>
<proteinExistence type="evidence at protein level"/>
<comment type="function">
    <text evidence="1 3 5">Transfers the sialyl residue from CMP-N-acetyl-beta-neuraminate to the terminal galactose residue on sugar chains of glycoproteins and glycolipids (PubMed:10206952, PubMed:26692484). It's alpha-2,3-sialyltransferase activity is specific toward type II glycan chains (Galbeta1-4GlcNAc) on glycoproteins and glycolipids such as neolactosides nLc4Cer and nLc6Cer, whose sialyl-products serve as precursors for the Lewis X antigen (PubMed:10206952, PubMed:26692484). Critically involved in the synthesis of functional selectin ligands needed for neutrophil recruitment during inflammation and lymphocyte homing to the lymph nodes (By similarity).</text>
</comment>
<comment type="catalytic activity">
    <reaction evidence="3">
        <text>a neolactoside nLc4Cer(d18:1(4E)) + CMP-N-acetyl-beta-neuraminate = a neolactoside IV(3)-alpha-NeuAc-nLc4Cer(d18:1(4E)) + CMP + H(+)</text>
        <dbReference type="Rhea" id="RHEA:18913"/>
        <dbReference type="ChEBI" id="CHEBI:15378"/>
        <dbReference type="ChEBI" id="CHEBI:17006"/>
        <dbReference type="ChEBI" id="CHEBI:57812"/>
        <dbReference type="ChEBI" id="CHEBI:58665"/>
        <dbReference type="ChEBI" id="CHEBI:60377"/>
        <dbReference type="EC" id="2.4.3.6"/>
    </reaction>
    <physiologicalReaction direction="left-to-right" evidence="8">
        <dbReference type="Rhea" id="RHEA:18914"/>
    </physiologicalReaction>
</comment>
<comment type="catalytic activity">
    <reaction evidence="3 5">
        <text>a beta-D-galactosyl-(1-&gt;4)-N-acetyl-beta-D-glucosaminyl derivative + CMP-N-acetyl-beta-neuraminate = an N-acetyl-alpha-neuraminyl-(2-&gt;3)-beta-D-galactosyl-(1-&gt;4)-N-acetyl-beta-D-glucosaminyl derivative + CMP + H(+)</text>
        <dbReference type="Rhea" id="RHEA:52316"/>
        <dbReference type="ChEBI" id="CHEBI:15378"/>
        <dbReference type="ChEBI" id="CHEBI:57812"/>
        <dbReference type="ChEBI" id="CHEBI:60377"/>
        <dbReference type="ChEBI" id="CHEBI:133507"/>
        <dbReference type="ChEBI" id="CHEBI:136545"/>
        <dbReference type="EC" id="2.4.3.6"/>
    </reaction>
    <physiologicalReaction direction="left-to-right" evidence="8 9">
        <dbReference type="Rhea" id="RHEA:52317"/>
    </physiologicalReaction>
</comment>
<comment type="catalytic activity">
    <reaction evidence="3">
        <text>a neolactoside nLc6Cer(d18:1(4E)) + CMP-N-acetyl-beta-neuraminate = a neolactoside VI(3)-alpha-NeuNAc-nLc6Cer(d18:1(4E)) + CMP + H(+)</text>
        <dbReference type="Rhea" id="RHEA:80751"/>
        <dbReference type="ChEBI" id="CHEBI:15378"/>
        <dbReference type="ChEBI" id="CHEBI:57812"/>
        <dbReference type="ChEBI" id="CHEBI:60377"/>
        <dbReference type="ChEBI" id="CHEBI:61610"/>
        <dbReference type="ChEBI" id="CHEBI:144452"/>
    </reaction>
    <physiologicalReaction direction="left-to-right" evidence="8">
        <dbReference type="Rhea" id="RHEA:80752"/>
    </physiologicalReaction>
</comment>
<comment type="biophysicochemical properties">
    <kinetics>
        <KM evidence="3">0.22 mM for a neolactoside nLc4Cer(d18:1(4E))</KM>
    </kinetics>
</comment>
<comment type="subcellular location">
    <subcellularLocation>
        <location evidence="7">Golgi apparatus membrane</location>
        <topology evidence="7">Single-pass type II membrane protein</topology>
    </subcellularLocation>
</comment>
<comment type="alternative products">
    <event type="alternative splicing"/>
    <isoform>
        <id>Q9Y274-1</id>
        <name>1</name>
        <sequence type="displayed"/>
    </isoform>
    <isoform>
        <id>Q9Y274-2</id>
        <name>2</name>
        <sequence type="described" ref="VSP_047009 VSP_047010"/>
    </isoform>
</comment>
<comment type="tissue specificity">
    <text>Ubiquitous.</text>
</comment>
<comment type="similarity">
    <text evidence="7">Belongs to the glycosyltransferase 29 family.</text>
</comment>
<comment type="online information" name="Functional Glycomics Gateway - GTase">
    <link uri="http://www.functionalglycomics.org/glycomics/molecule/jsp/glycoEnzyme/viewGlycoEnzyme.jsp?gbpId=gt_hum_627"/>
    <text>ST3Gal VI</text>
</comment>
<accession>Q9Y274</accession>
<accession>B2RCH2</accession>
<accession>B3KMI1</accession>
<accession>D3DN39</accession>
<accession>F8W6U0</accession>
<dbReference type="EC" id="2.4.3.6" evidence="3 5"/>
<dbReference type="EMBL" id="AB022918">
    <property type="protein sequence ID" value="BAA77609.1"/>
    <property type="molecule type" value="mRNA"/>
</dbReference>
<dbReference type="EMBL" id="AF119391">
    <property type="protein sequence ID" value="AAD39131.1"/>
    <property type="molecule type" value="mRNA"/>
</dbReference>
<dbReference type="EMBL" id="AK315111">
    <property type="protein sequence ID" value="BAG37569.1"/>
    <property type="molecule type" value="mRNA"/>
</dbReference>
<dbReference type="EMBL" id="AK001922">
    <property type="protein sequence ID" value="BAG50993.1"/>
    <property type="molecule type" value="mRNA"/>
</dbReference>
<dbReference type="EMBL" id="AC106728">
    <property type="status" value="NOT_ANNOTATED_CDS"/>
    <property type="molecule type" value="Genomic_DNA"/>
</dbReference>
<dbReference type="EMBL" id="CH471052">
    <property type="protein sequence ID" value="EAW79849.1"/>
    <property type="molecule type" value="Genomic_DNA"/>
</dbReference>
<dbReference type="EMBL" id="CH471052">
    <property type="protein sequence ID" value="EAW79850.1"/>
    <property type="molecule type" value="Genomic_DNA"/>
</dbReference>
<dbReference type="EMBL" id="CH471052">
    <property type="protein sequence ID" value="EAW79852.1"/>
    <property type="molecule type" value="Genomic_DNA"/>
</dbReference>
<dbReference type="EMBL" id="BC023312">
    <property type="protein sequence ID" value="AAH23312.1"/>
    <property type="molecule type" value="mRNA"/>
</dbReference>
<dbReference type="CCDS" id="CCDS2933.1">
    <molecule id="Q9Y274-1"/>
</dbReference>
<dbReference type="RefSeq" id="NP_001258074.1">
    <property type="nucleotide sequence ID" value="NM_001271145.1"/>
</dbReference>
<dbReference type="RefSeq" id="NP_001258075.1">
    <molecule id="Q9Y274-1"/>
    <property type="nucleotide sequence ID" value="NM_001271146.2"/>
</dbReference>
<dbReference type="RefSeq" id="NP_001258076.1">
    <molecule id="Q9Y274-2"/>
    <property type="nucleotide sequence ID" value="NM_001271147.2"/>
</dbReference>
<dbReference type="RefSeq" id="NP_001310281.1">
    <molecule id="Q9Y274-1"/>
    <property type="nucleotide sequence ID" value="NM_001323352.2"/>
</dbReference>
<dbReference type="RefSeq" id="NP_001310294.1">
    <molecule id="Q9Y274-1"/>
    <property type="nucleotide sequence ID" value="NM_001323365.2"/>
</dbReference>
<dbReference type="RefSeq" id="NP_001310296.2">
    <molecule id="Q9Y274-1"/>
    <property type="nucleotide sequence ID" value="NM_001323367.4"/>
</dbReference>
<dbReference type="RefSeq" id="NP_001310297.1">
    <molecule id="Q9Y274-1"/>
    <property type="nucleotide sequence ID" value="NM_001323368.2"/>
</dbReference>
<dbReference type="RefSeq" id="NP_006091.1">
    <molecule id="Q9Y274-1"/>
    <property type="nucleotide sequence ID" value="NM_006100.4"/>
</dbReference>
<dbReference type="SMR" id="Q9Y274"/>
<dbReference type="BioGRID" id="115674">
    <property type="interactions" value="29"/>
</dbReference>
<dbReference type="CORUM" id="Q9Y274"/>
<dbReference type="FunCoup" id="Q9Y274">
    <property type="interactions" value="278"/>
</dbReference>
<dbReference type="IntAct" id="Q9Y274">
    <property type="interactions" value="20"/>
</dbReference>
<dbReference type="STRING" id="9606.ENSP00000480884"/>
<dbReference type="CAZy" id="GT29">
    <property type="family name" value="Glycosyltransferase Family 29"/>
</dbReference>
<dbReference type="GlyConnect" id="1868">
    <property type="glycosylation" value="11 N-Linked glycans (1 site)"/>
</dbReference>
<dbReference type="GlyCosmos" id="Q9Y274">
    <property type="glycosylation" value="6 sites, 11 glycans"/>
</dbReference>
<dbReference type="GlyGen" id="Q9Y274">
    <property type="glycosylation" value="7 sites, 16 N-linked glycans (3 sites)"/>
</dbReference>
<dbReference type="iPTMnet" id="Q9Y274"/>
<dbReference type="PhosphoSitePlus" id="Q9Y274"/>
<dbReference type="BioMuta" id="ST3GAL6"/>
<dbReference type="DMDM" id="54039605"/>
<dbReference type="jPOST" id="Q9Y274"/>
<dbReference type="MassIVE" id="Q9Y274"/>
<dbReference type="PaxDb" id="9606-ENSP00000480884"/>
<dbReference type="PeptideAtlas" id="Q9Y274"/>
<dbReference type="ProteomicsDB" id="29837"/>
<dbReference type="ProteomicsDB" id="85676">
    <molecule id="Q9Y274-1"/>
</dbReference>
<dbReference type="Antibodypedia" id="35151">
    <property type="antibodies" value="59 antibodies from 22 providers"/>
</dbReference>
<dbReference type="DNASU" id="10402"/>
<dbReference type="Ensembl" id="ENST00000265261.11">
    <molecule id="Q9Y274-1"/>
    <property type="protein sequence ID" value="ENSP00000265261.7"/>
    <property type="gene ID" value="ENSG00000064225.13"/>
</dbReference>
<dbReference type="Ensembl" id="ENST00000394162.5">
    <molecule id="Q9Y274-1"/>
    <property type="protein sequence ID" value="ENSP00000377717.1"/>
    <property type="gene ID" value="ENSG00000064225.13"/>
</dbReference>
<dbReference type="Ensembl" id="ENST00000483910.6">
    <molecule id="Q9Y274-1"/>
    <property type="protein sequence ID" value="ENSP00000417376.1"/>
    <property type="gene ID" value="ENSG00000064225.13"/>
</dbReference>
<dbReference type="Ensembl" id="ENST00000613264.5">
    <molecule id="Q9Y274-1"/>
    <property type="protein sequence ID" value="ENSP00000480884.2"/>
    <property type="gene ID" value="ENSG00000064225.13"/>
</dbReference>
<dbReference type="GeneID" id="10402"/>
<dbReference type="KEGG" id="hsa:10402"/>
<dbReference type="MANE-Select" id="ENST00000483910.6">
    <property type="protein sequence ID" value="ENSP00000417376.1"/>
    <property type="RefSeq nucleotide sequence ID" value="NM_001323368.2"/>
    <property type="RefSeq protein sequence ID" value="NP_001310297.1"/>
</dbReference>
<dbReference type="UCSC" id="uc003dsz.5">
    <molecule id="Q9Y274-1"/>
    <property type="organism name" value="human"/>
</dbReference>
<dbReference type="AGR" id="HGNC:18080"/>
<dbReference type="CTD" id="10402"/>
<dbReference type="DisGeNET" id="10402"/>
<dbReference type="GeneCards" id="ST3GAL6"/>
<dbReference type="HGNC" id="HGNC:18080">
    <property type="gene designation" value="ST3GAL6"/>
</dbReference>
<dbReference type="HPA" id="ENSG00000064225">
    <property type="expression patterns" value="Tissue enhanced (liver)"/>
</dbReference>
<dbReference type="MIM" id="607156">
    <property type="type" value="gene"/>
</dbReference>
<dbReference type="neXtProt" id="NX_Q9Y274"/>
<dbReference type="OpenTargets" id="ENSG00000064225"/>
<dbReference type="PharmGKB" id="PA134958548"/>
<dbReference type="VEuPathDB" id="HostDB:ENSG00000064225"/>
<dbReference type="eggNOG" id="KOG2692">
    <property type="taxonomic scope" value="Eukaryota"/>
</dbReference>
<dbReference type="GeneTree" id="ENSGT00940000161415"/>
<dbReference type="HOGENOM" id="CLU_032020_1_2_1"/>
<dbReference type="InParanoid" id="Q9Y274"/>
<dbReference type="OMA" id="LAFHICS"/>
<dbReference type="OrthoDB" id="10264956at2759"/>
<dbReference type="PAN-GO" id="Q9Y274">
    <property type="GO annotations" value="2 GO annotations based on evolutionary models"/>
</dbReference>
<dbReference type="PhylomeDB" id="Q9Y274"/>
<dbReference type="TreeFam" id="TF354325"/>
<dbReference type="BioCyc" id="MetaCyc:ENSG00000064225-MONOMER"/>
<dbReference type="PathwayCommons" id="Q9Y274"/>
<dbReference type="Reactome" id="R-HSA-1912420">
    <property type="pathway name" value="Pre-NOTCH Processing in Golgi"/>
</dbReference>
<dbReference type="Reactome" id="R-HSA-2022854">
    <property type="pathway name" value="Keratan sulfate biosynthesis"/>
</dbReference>
<dbReference type="Reactome" id="R-HSA-4085001">
    <property type="pathway name" value="Sialic acid metabolism"/>
</dbReference>
<dbReference type="Reactome" id="R-HSA-9037629">
    <property type="pathway name" value="Lewis blood group biosynthesis"/>
</dbReference>
<dbReference type="SignaLink" id="Q9Y274"/>
<dbReference type="BioGRID-ORCS" id="10402">
    <property type="hits" value="40 hits in 1151 CRISPR screens"/>
</dbReference>
<dbReference type="ChiTaRS" id="ST3GAL6">
    <property type="organism name" value="human"/>
</dbReference>
<dbReference type="GenomeRNAi" id="10402"/>
<dbReference type="Pharos" id="Q9Y274">
    <property type="development level" value="Tbio"/>
</dbReference>
<dbReference type="PRO" id="PR:Q9Y274"/>
<dbReference type="Proteomes" id="UP000005640">
    <property type="component" value="Chromosome 3"/>
</dbReference>
<dbReference type="RNAct" id="Q9Y274">
    <property type="molecule type" value="protein"/>
</dbReference>
<dbReference type="Bgee" id="ENSG00000064225">
    <property type="expression patterns" value="Expressed in adrenal tissue and 191 other cell types or tissues"/>
</dbReference>
<dbReference type="ExpressionAtlas" id="Q9Y274">
    <property type="expression patterns" value="baseline and differential"/>
</dbReference>
<dbReference type="GO" id="GO:0070062">
    <property type="term" value="C:extracellular exosome"/>
    <property type="evidence" value="ECO:0007005"/>
    <property type="project" value="UniProtKB"/>
</dbReference>
<dbReference type="GO" id="GO:0000139">
    <property type="term" value="C:Golgi membrane"/>
    <property type="evidence" value="ECO:0000304"/>
    <property type="project" value="Reactome"/>
</dbReference>
<dbReference type="GO" id="GO:0016020">
    <property type="term" value="C:membrane"/>
    <property type="evidence" value="ECO:0000303"/>
    <property type="project" value="UniProtKB"/>
</dbReference>
<dbReference type="GO" id="GO:0003836">
    <property type="term" value="F:beta-galactoside (CMP) alpha-2,3-sialyltransferase activity"/>
    <property type="evidence" value="ECO:0000304"/>
    <property type="project" value="Reactome"/>
</dbReference>
<dbReference type="GO" id="GO:0008118">
    <property type="term" value="F:N-acetyllactosaminide alpha-2,3-sialyltransferase activity"/>
    <property type="evidence" value="ECO:0000314"/>
    <property type="project" value="UniProtKB"/>
</dbReference>
<dbReference type="GO" id="GO:0008373">
    <property type="term" value="F:sialyltransferase activity"/>
    <property type="evidence" value="ECO:0000318"/>
    <property type="project" value="GO_Central"/>
</dbReference>
<dbReference type="GO" id="GO:0071354">
    <property type="term" value="P:cellular response to interleukin-6"/>
    <property type="evidence" value="ECO:0000270"/>
    <property type="project" value="UniProtKB"/>
</dbReference>
<dbReference type="GO" id="GO:0009247">
    <property type="term" value="P:glycolipid biosynthetic process"/>
    <property type="evidence" value="ECO:0000314"/>
    <property type="project" value="UniProtKB"/>
</dbReference>
<dbReference type="GO" id="GO:0018146">
    <property type="term" value="P:keratan sulfate proteoglycan biosynthetic process"/>
    <property type="evidence" value="ECO:0000304"/>
    <property type="project" value="Reactome"/>
</dbReference>
<dbReference type="GO" id="GO:0009312">
    <property type="term" value="P:oligosaccharide biosynthetic process"/>
    <property type="evidence" value="ECO:0000304"/>
    <property type="project" value="Reactome"/>
</dbReference>
<dbReference type="GO" id="GO:0006486">
    <property type="term" value="P:protein glycosylation"/>
    <property type="evidence" value="ECO:0000314"/>
    <property type="project" value="UniProtKB"/>
</dbReference>
<dbReference type="CDD" id="cd23984">
    <property type="entry name" value="GT29_ST3GAL6"/>
    <property type="match status" value="1"/>
</dbReference>
<dbReference type="FunFam" id="3.90.1480.20:FF:000007">
    <property type="entry name" value="Type 2 lactosamine alpha-2,3-sialyltransferase"/>
    <property type="match status" value="1"/>
</dbReference>
<dbReference type="Gene3D" id="3.90.1480.20">
    <property type="entry name" value="Glycosyl transferase family 29"/>
    <property type="match status" value="1"/>
</dbReference>
<dbReference type="InterPro" id="IPR001675">
    <property type="entry name" value="Glyco_trans_29"/>
</dbReference>
<dbReference type="InterPro" id="IPR051142">
    <property type="entry name" value="Glycosyltransferase_29"/>
</dbReference>
<dbReference type="InterPro" id="IPR038578">
    <property type="entry name" value="GT29-like_sf"/>
</dbReference>
<dbReference type="InterPro" id="IPR012163">
    <property type="entry name" value="Sialyl_trans"/>
</dbReference>
<dbReference type="PANTHER" id="PTHR13713">
    <property type="entry name" value="SIALYLTRANSFERASE"/>
    <property type="match status" value="1"/>
</dbReference>
<dbReference type="PANTHER" id="PTHR13713:SF8">
    <property type="entry name" value="TYPE 2 LACTOSAMINE ALPHA-2,3-SIALYLTRANSFERASE"/>
    <property type="match status" value="1"/>
</dbReference>
<dbReference type="Pfam" id="PF00777">
    <property type="entry name" value="Glyco_transf_29"/>
    <property type="match status" value="1"/>
</dbReference>
<dbReference type="PIRSF" id="PIRSF005557">
    <property type="entry name" value="Sialyl_trans"/>
    <property type="match status" value="1"/>
</dbReference>
<sequence length="331" mass="38214">MRGYLVAIFLSAVFLYYVLHCILWGTNVYWVAPVEMKRRNKIQPCLSKPAFASLLRFHQFHPFLCAADFRKIASLYGSDKFDLPYGMRTSAEYFRLALSKLQSCDLFDEFDNIPCKKCVVVGNGGVLKNKTLGEKIDSYDVIIRMNNGPVLGHEEEVGRRTTFRLFYPESVFSDPIHNDPNTTVILTAFKPHDLRWLLELLMGDKINTNGFWKKPALNLIYKPYQIRILDPFIIRTAAYELLHFPKVFPKNQKPKHPTTGIIAITLAFYICHEVHLAGFKYNFSDLKSPLHYYGNATMSLMNKNAYHNVTAEQLFLKDIIEKNLVINLTQD</sequence>
<evidence type="ECO:0000250" key="1">
    <source>
        <dbReference type="UniProtKB" id="Q8VIB3"/>
    </source>
</evidence>
<evidence type="ECO:0000255" key="2"/>
<evidence type="ECO:0000269" key="3">
    <source>
    </source>
</evidence>
<evidence type="ECO:0000269" key="4">
    <source>
    </source>
</evidence>
<evidence type="ECO:0000269" key="5">
    <source>
    </source>
</evidence>
<evidence type="ECO:0000303" key="6">
    <source>
    </source>
</evidence>
<evidence type="ECO:0000305" key="7"/>
<evidence type="ECO:0000305" key="8">
    <source>
    </source>
</evidence>
<evidence type="ECO:0000305" key="9">
    <source>
    </source>
</evidence>
<gene>
    <name type="primary">ST3GAL6</name>
    <name type="synonym">SIAT10</name>
</gene>
<organism>
    <name type="scientific">Homo sapiens</name>
    <name type="common">Human</name>
    <dbReference type="NCBI Taxonomy" id="9606"/>
    <lineage>
        <taxon>Eukaryota</taxon>
        <taxon>Metazoa</taxon>
        <taxon>Chordata</taxon>
        <taxon>Craniata</taxon>
        <taxon>Vertebrata</taxon>
        <taxon>Euteleostomi</taxon>
        <taxon>Mammalia</taxon>
        <taxon>Eutheria</taxon>
        <taxon>Euarchontoglires</taxon>
        <taxon>Primates</taxon>
        <taxon>Haplorrhini</taxon>
        <taxon>Catarrhini</taxon>
        <taxon>Hominidae</taxon>
        <taxon>Homo</taxon>
    </lineage>
</organism>
<feature type="chain" id="PRO_0000149305" description="Type 2 lactosamine alpha-2,3-sialyltransferase">
    <location>
        <begin position="1"/>
        <end position="331"/>
    </location>
</feature>
<feature type="topological domain" description="Cytoplasmic" evidence="2">
    <location>
        <begin position="1"/>
        <end position="4"/>
    </location>
</feature>
<feature type="transmembrane region" description="Helical; Signal-anchor for type II membrane protein" evidence="2">
    <location>
        <begin position="5"/>
        <end position="25"/>
    </location>
</feature>
<feature type="topological domain" description="Lumenal" evidence="2">
    <location>
        <begin position="26"/>
        <end position="331"/>
    </location>
</feature>
<feature type="glycosylation site" description="N-linked (GlcNAc...) asparagine" evidence="2">
    <location>
        <position position="129"/>
    </location>
</feature>
<feature type="glycosylation site" description="N-linked (GlcNAc...) asparagine" evidence="2">
    <location>
        <position position="181"/>
    </location>
</feature>
<feature type="glycosylation site" description="N-linked (GlcNAc...) asparagine" evidence="2">
    <location>
        <position position="282"/>
    </location>
</feature>
<feature type="glycosylation site" description="N-linked (GlcNAc...) asparagine" evidence="2">
    <location>
        <position position="295"/>
    </location>
</feature>
<feature type="glycosylation site" description="N-linked (GlcNAc...) asparagine" evidence="4">
    <location>
        <position position="308"/>
    </location>
</feature>
<feature type="glycosylation site" description="N-linked (GlcNAc...) asparagine" evidence="2">
    <location>
        <position position="327"/>
    </location>
</feature>
<feature type="splice variant" id="VSP_047009" description="In isoform 2." evidence="6">
    <location>
        <begin position="1"/>
        <end position="86"/>
    </location>
</feature>
<feature type="splice variant" id="VSP_047010" description="In isoform 2." evidence="6">
    <original>NIPCKKCVVVGNGGVLKNKTLGEKIDSYDVIIR</original>
    <variation>K</variation>
    <location>
        <begin position="112"/>
        <end position="144"/>
    </location>
</feature>
<feature type="sequence variant" id="VAR_049227" description="In dbSNP:rs28489284.">
    <original>A</original>
    <variation>T</variation>
    <location>
        <position position="311"/>
    </location>
</feature>
<feature type="sequence conflict" description="In Ref. 3; BAG50993." evidence="7" ref="3">
    <original>C</original>
    <variation>S</variation>
    <location>
        <position position="271"/>
    </location>
</feature>